<protein>
    <recommendedName>
        <fullName evidence="1">NADH-quinone oxidoreductase subunit I</fullName>
        <ecNumber evidence="1">7.1.1.-</ecNumber>
    </recommendedName>
    <alternativeName>
        <fullName evidence="1">NADH dehydrogenase I subunit I</fullName>
    </alternativeName>
    <alternativeName>
        <fullName evidence="1">NDH-1 subunit I</fullName>
    </alternativeName>
</protein>
<comment type="function">
    <text evidence="1">NDH-1 shuttles electrons from NADH, via FMN and iron-sulfur (Fe-S) centers, to quinones in the respiratory chain. The immediate electron acceptor for the enzyme in this species is believed to be ubiquinone. Couples the redox reaction to proton translocation (for every two electrons transferred, four hydrogen ions are translocated across the cytoplasmic membrane), and thus conserves the redox energy in a proton gradient.</text>
</comment>
<comment type="catalytic activity">
    <reaction evidence="1">
        <text>a quinone + NADH + 5 H(+)(in) = a quinol + NAD(+) + 4 H(+)(out)</text>
        <dbReference type="Rhea" id="RHEA:57888"/>
        <dbReference type="ChEBI" id="CHEBI:15378"/>
        <dbReference type="ChEBI" id="CHEBI:24646"/>
        <dbReference type="ChEBI" id="CHEBI:57540"/>
        <dbReference type="ChEBI" id="CHEBI:57945"/>
        <dbReference type="ChEBI" id="CHEBI:132124"/>
    </reaction>
</comment>
<comment type="cofactor">
    <cofactor evidence="1">
        <name>[4Fe-4S] cluster</name>
        <dbReference type="ChEBI" id="CHEBI:49883"/>
    </cofactor>
    <text evidence="1">Binds 2 [4Fe-4S] clusters per subunit.</text>
</comment>
<comment type="subunit">
    <text evidence="1">NDH-1 is composed of 14 different subunits. Subunits NuoA, H, J, K, L, M, N constitute the membrane sector of the complex.</text>
</comment>
<comment type="subcellular location">
    <subcellularLocation>
        <location evidence="1">Cell inner membrane</location>
        <topology evidence="1">Peripheral membrane protein</topology>
    </subcellularLocation>
</comment>
<comment type="similarity">
    <text evidence="1">Belongs to the complex I 23 kDa subunit family.</text>
</comment>
<accession>Q5FHN1</accession>
<dbReference type="EC" id="7.1.1.-" evidence="1"/>
<dbReference type="EMBL" id="CR925677">
    <property type="protein sequence ID" value="CAI27831.1"/>
    <property type="molecule type" value="Genomic_DNA"/>
</dbReference>
<dbReference type="RefSeq" id="WP_011155053.1">
    <property type="nucleotide sequence ID" value="NC_006831.1"/>
</dbReference>
<dbReference type="SMR" id="Q5FHN1"/>
<dbReference type="GeneID" id="33057472"/>
<dbReference type="KEGG" id="erg:ERGA_CDS_03790"/>
<dbReference type="HOGENOM" id="CLU_067218_5_1_5"/>
<dbReference type="OrthoDB" id="9808559at2"/>
<dbReference type="Proteomes" id="UP000000533">
    <property type="component" value="Chromosome"/>
</dbReference>
<dbReference type="GO" id="GO:0005886">
    <property type="term" value="C:plasma membrane"/>
    <property type="evidence" value="ECO:0007669"/>
    <property type="project" value="UniProtKB-SubCell"/>
</dbReference>
<dbReference type="GO" id="GO:0051539">
    <property type="term" value="F:4 iron, 4 sulfur cluster binding"/>
    <property type="evidence" value="ECO:0007669"/>
    <property type="project" value="UniProtKB-KW"/>
</dbReference>
<dbReference type="GO" id="GO:0005506">
    <property type="term" value="F:iron ion binding"/>
    <property type="evidence" value="ECO:0007669"/>
    <property type="project" value="UniProtKB-UniRule"/>
</dbReference>
<dbReference type="GO" id="GO:0050136">
    <property type="term" value="F:NADH:ubiquinone reductase (non-electrogenic) activity"/>
    <property type="evidence" value="ECO:0007669"/>
    <property type="project" value="UniProtKB-UniRule"/>
</dbReference>
<dbReference type="GO" id="GO:0048038">
    <property type="term" value="F:quinone binding"/>
    <property type="evidence" value="ECO:0007669"/>
    <property type="project" value="UniProtKB-KW"/>
</dbReference>
<dbReference type="GO" id="GO:0009060">
    <property type="term" value="P:aerobic respiration"/>
    <property type="evidence" value="ECO:0007669"/>
    <property type="project" value="TreeGrafter"/>
</dbReference>
<dbReference type="FunFam" id="3.30.70.3270:FF:000001">
    <property type="entry name" value="NADH-quinone oxidoreductase subunit I 1"/>
    <property type="match status" value="1"/>
</dbReference>
<dbReference type="Gene3D" id="3.30.70.3270">
    <property type="match status" value="1"/>
</dbReference>
<dbReference type="HAMAP" id="MF_01351">
    <property type="entry name" value="NDH1_NuoI"/>
    <property type="match status" value="1"/>
</dbReference>
<dbReference type="InterPro" id="IPR017896">
    <property type="entry name" value="4Fe4S_Fe-S-bd"/>
</dbReference>
<dbReference type="InterPro" id="IPR017900">
    <property type="entry name" value="4Fe4S_Fe_S_CS"/>
</dbReference>
<dbReference type="InterPro" id="IPR010226">
    <property type="entry name" value="NADH_quinone_OxRdtase_chainI"/>
</dbReference>
<dbReference type="NCBIfam" id="TIGR01971">
    <property type="entry name" value="NuoI"/>
    <property type="match status" value="1"/>
</dbReference>
<dbReference type="NCBIfam" id="NF004538">
    <property type="entry name" value="PRK05888.1-4"/>
    <property type="match status" value="1"/>
</dbReference>
<dbReference type="NCBIfam" id="NF004539">
    <property type="entry name" value="PRK05888.1-5"/>
    <property type="match status" value="1"/>
</dbReference>
<dbReference type="PANTHER" id="PTHR10849:SF20">
    <property type="entry name" value="NADH DEHYDROGENASE [UBIQUINONE] IRON-SULFUR PROTEIN 8, MITOCHONDRIAL"/>
    <property type="match status" value="1"/>
</dbReference>
<dbReference type="PANTHER" id="PTHR10849">
    <property type="entry name" value="NADH DEHYDROGENASE UBIQUINONE IRON-SULFUR PROTEIN 8, MITOCHONDRIAL"/>
    <property type="match status" value="1"/>
</dbReference>
<dbReference type="Pfam" id="PF12838">
    <property type="entry name" value="Fer4_7"/>
    <property type="match status" value="1"/>
</dbReference>
<dbReference type="SUPFAM" id="SSF54862">
    <property type="entry name" value="4Fe-4S ferredoxins"/>
    <property type="match status" value="1"/>
</dbReference>
<dbReference type="PROSITE" id="PS00198">
    <property type="entry name" value="4FE4S_FER_1"/>
    <property type="match status" value="2"/>
</dbReference>
<dbReference type="PROSITE" id="PS51379">
    <property type="entry name" value="4FE4S_FER_2"/>
    <property type="match status" value="2"/>
</dbReference>
<name>NUOI_EHRRG</name>
<evidence type="ECO:0000255" key="1">
    <source>
        <dbReference type="HAMAP-Rule" id="MF_01351"/>
    </source>
</evidence>
<keyword id="KW-0004">4Fe-4S</keyword>
<keyword id="KW-0997">Cell inner membrane</keyword>
<keyword id="KW-1003">Cell membrane</keyword>
<keyword id="KW-0408">Iron</keyword>
<keyword id="KW-0411">Iron-sulfur</keyword>
<keyword id="KW-0472">Membrane</keyword>
<keyword id="KW-0479">Metal-binding</keyword>
<keyword id="KW-0520">NAD</keyword>
<keyword id="KW-0874">Quinone</keyword>
<keyword id="KW-0677">Repeat</keyword>
<keyword id="KW-1278">Translocase</keyword>
<keyword id="KW-0830">Ubiquinone</keyword>
<gene>
    <name evidence="1" type="primary">nuoI</name>
    <name type="ordered locus">ERGA_CDS_03790</name>
</gene>
<feature type="chain" id="PRO_0000250904" description="NADH-quinone oxidoreductase subunit I">
    <location>
        <begin position="1"/>
        <end position="168"/>
    </location>
</feature>
<feature type="domain" description="4Fe-4S ferredoxin-type 1" evidence="1">
    <location>
        <begin position="58"/>
        <end position="88"/>
    </location>
</feature>
<feature type="domain" description="4Fe-4S ferredoxin-type 2" evidence="1">
    <location>
        <begin position="99"/>
        <end position="128"/>
    </location>
</feature>
<feature type="binding site" evidence="1">
    <location>
        <position position="68"/>
    </location>
    <ligand>
        <name>[4Fe-4S] cluster</name>
        <dbReference type="ChEBI" id="CHEBI:49883"/>
        <label>1</label>
    </ligand>
</feature>
<feature type="binding site" evidence="1">
    <location>
        <position position="71"/>
    </location>
    <ligand>
        <name>[4Fe-4S] cluster</name>
        <dbReference type="ChEBI" id="CHEBI:49883"/>
        <label>1</label>
    </ligand>
</feature>
<feature type="binding site" evidence="1">
    <location>
        <position position="74"/>
    </location>
    <ligand>
        <name>[4Fe-4S] cluster</name>
        <dbReference type="ChEBI" id="CHEBI:49883"/>
        <label>1</label>
    </ligand>
</feature>
<feature type="binding site" evidence="1">
    <location>
        <position position="78"/>
    </location>
    <ligand>
        <name>[4Fe-4S] cluster</name>
        <dbReference type="ChEBI" id="CHEBI:49883"/>
        <label>2</label>
    </ligand>
</feature>
<feature type="binding site" evidence="1">
    <location>
        <position position="108"/>
    </location>
    <ligand>
        <name>[4Fe-4S] cluster</name>
        <dbReference type="ChEBI" id="CHEBI:49883"/>
        <label>2</label>
    </ligand>
</feature>
<feature type="binding site" evidence="1">
    <location>
        <position position="111"/>
    </location>
    <ligand>
        <name>[4Fe-4S] cluster</name>
        <dbReference type="ChEBI" id="CHEBI:49883"/>
        <label>2</label>
    </ligand>
</feature>
<feature type="binding site" evidence="1">
    <location>
        <position position="114"/>
    </location>
    <ligand>
        <name>[4Fe-4S] cluster</name>
        <dbReference type="ChEBI" id="CHEBI:49883"/>
        <label>2</label>
    </ligand>
</feature>
<feature type="binding site" evidence="1">
    <location>
        <position position="118"/>
    </location>
    <ligand>
        <name>[4Fe-4S] cluster</name>
        <dbReference type="ChEBI" id="CHEBI:49883"/>
        <label>1</label>
    </ligand>
</feature>
<proteinExistence type="inferred from homology"/>
<organism>
    <name type="scientific">Ehrlichia ruminantium (strain Gardel)</name>
    <dbReference type="NCBI Taxonomy" id="302409"/>
    <lineage>
        <taxon>Bacteria</taxon>
        <taxon>Pseudomonadati</taxon>
        <taxon>Pseudomonadota</taxon>
        <taxon>Alphaproteobacteria</taxon>
        <taxon>Rickettsiales</taxon>
        <taxon>Anaplasmataceae</taxon>
        <taxon>Ehrlichia</taxon>
    </lineage>
</organism>
<reference key="1">
    <citation type="journal article" date="2006" name="J. Bacteriol.">
        <title>Comparative genomic analysis of three strains of Ehrlichia ruminantium reveals an active process of genome size plasticity.</title>
        <authorList>
            <person name="Frutos R."/>
            <person name="Viari A."/>
            <person name="Ferraz C."/>
            <person name="Morgat A."/>
            <person name="Eychenie S."/>
            <person name="Kandassamy Y."/>
            <person name="Chantal I."/>
            <person name="Bensaid A."/>
            <person name="Coissac E."/>
            <person name="Vachiery N."/>
            <person name="Demaille J."/>
            <person name="Martinez D."/>
        </authorList>
    </citation>
    <scope>NUCLEOTIDE SEQUENCE [LARGE SCALE GENOMIC DNA]</scope>
    <source>
        <strain>Gardel</strain>
    </source>
</reference>
<sequence length="168" mass="19681">MINKRSLLASFINLPYSLFITFKGMYITLRYMFKPKVTLNYPLEKNPLSTRFRGEHALRTYKNGEERCIACKLCEAICPAQAITIEAQERDTDNSRRTVRYDIDMTKCIYCGFCQEACPVDAIVEGPNFEYATETREELMYNKSKLLHNGQIWEEAIDLRIKKNSKFY</sequence>